<accession>B1YGU6</accession>
<dbReference type="EMBL" id="CP001022">
    <property type="protein sequence ID" value="ACB59579.1"/>
    <property type="molecule type" value="Genomic_DNA"/>
</dbReference>
<dbReference type="RefSeq" id="WP_012369005.1">
    <property type="nucleotide sequence ID" value="NC_010556.1"/>
</dbReference>
<dbReference type="SMR" id="B1YGU6"/>
<dbReference type="STRING" id="262543.Exig_0092"/>
<dbReference type="KEGG" id="esi:Exig_0092"/>
<dbReference type="eggNOG" id="COG0049">
    <property type="taxonomic scope" value="Bacteria"/>
</dbReference>
<dbReference type="HOGENOM" id="CLU_072226_1_1_9"/>
<dbReference type="OrthoDB" id="9807653at2"/>
<dbReference type="Proteomes" id="UP000001681">
    <property type="component" value="Chromosome"/>
</dbReference>
<dbReference type="GO" id="GO:0015935">
    <property type="term" value="C:small ribosomal subunit"/>
    <property type="evidence" value="ECO:0007669"/>
    <property type="project" value="InterPro"/>
</dbReference>
<dbReference type="GO" id="GO:0019843">
    <property type="term" value="F:rRNA binding"/>
    <property type="evidence" value="ECO:0007669"/>
    <property type="project" value="UniProtKB-UniRule"/>
</dbReference>
<dbReference type="GO" id="GO:0003735">
    <property type="term" value="F:structural constituent of ribosome"/>
    <property type="evidence" value="ECO:0007669"/>
    <property type="project" value="InterPro"/>
</dbReference>
<dbReference type="GO" id="GO:0000049">
    <property type="term" value="F:tRNA binding"/>
    <property type="evidence" value="ECO:0007669"/>
    <property type="project" value="UniProtKB-UniRule"/>
</dbReference>
<dbReference type="GO" id="GO:0006412">
    <property type="term" value="P:translation"/>
    <property type="evidence" value="ECO:0007669"/>
    <property type="project" value="UniProtKB-UniRule"/>
</dbReference>
<dbReference type="CDD" id="cd14869">
    <property type="entry name" value="uS7_Bacteria"/>
    <property type="match status" value="1"/>
</dbReference>
<dbReference type="FunFam" id="1.10.455.10:FF:000001">
    <property type="entry name" value="30S ribosomal protein S7"/>
    <property type="match status" value="1"/>
</dbReference>
<dbReference type="Gene3D" id="1.10.455.10">
    <property type="entry name" value="Ribosomal protein S7 domain"/>
    <property type="match status" value="1"/>
</dbReference>
<dbReference type="HAMAP" id="MF_00480_B">
    <property type="entry name" value="Ribosomal_uS7_B"/>
    <property type="match status" value="1"/>
</dbReference>
<dbReference type="InterPro" id="IPR000235">
    <property type="entry name" value="Ribosomal_uS7"/>
</dbReference>
<dbReference type="InterPro" id="IPR005717">
    <property type="entry name" value="Ribosomal_uS7_bac/org-type"/>
</dbReference>
<dbReference type="InterPro" id="IPR020606">
    <property type="entry name" value="Ribosomal_uS7_CS"/>
</dbReference>
<dbReference type="InterPro" id="IPR023798">
    <property type="entry name" value="Ribosomal_uS7_dom"/>
</dbReference>
<dbReference type="InterPro" id="IPR036823">
    <property type="entry name" value="Ribosomal_uS7_dom_sf"/>
</dbReference>
<dbReference type="NCBIfam" id="TIGR01029">
    <property type="entry name" value="rpsG_bact"/>
    <property type="match status" value="1"/>
</dbReference>
<dbReference type="PANTHER" id="PTHR11205">
    <property type="entry name" value="RIBOSOMAL PROTEIN S7"/>
    <property type="match status" value="1"/>
</dbReference>
<dbReference type="Pfam" id="PF00177">
    <property type="entry name" value="Ribosomal_S7"/>
    <property type="match status" value="1"/>
</dbReference>
<dbReference type="PIRSF" id="PIRSF002122">
    <property type="entry name" value="RPS7p_RPS7a_RPS5e_RPS7o"/>
    <property type="match status" value="1"/>
</dbReference>
<dbReference type="SUPFAM" id="SSF47973">
    <property type="entry name" value="Ribosomal protein S7"/>
    <property type="match status" value="1"/>
</dbReference>
<dbReference type="PROSITE" id="PS00052">
    <property type="entry name" value="RIBOSOMAL_S7"/>
    <property type="match status" value="1"/>
</dbReference>
<organism>
    <name type="scientific">Exiguobacterium sibiricum (strain DSM 17290 / CCUG 55495 / CIP 109462 / JCM 13490 / 255-15)</name>
    <dbReference type="NCBI Taxonomy" id="262543"/>
    <lineage>
        <taxon>Bacteria</taxon>
        <taxon>Bacillati</taxon>
        <taxon>Bacillota</taxon>
        <taxon>Bacilli</taxon>
        <taxon>Bacillales</taxon>
        <taxon>Bacillales Family XII. Incertae Sedis</taxon>
        <taxon>Exiguobacterium</taxon>
    </lineage>
</organism>
<evidence type="ECO:0000255" key="1">
    <source>
        <dbReference type="HAMAP-Rule" id="MF_00480"/>
    </source>
</evidence>
<evidence type="ECO:0000305" key="2"/>
<gene>
    <name evidence="1" type="primary">rpsG</name>
    <name type="ordered locus">Exig_0092</name>
</gene>
<feature type="chain" id="PRO_1000125947" description="Small ribosomal subunit protein uS7">
    <location>
        <begin position="1"/>
        <end position="156"/>
    </location>
</feature>
<keyword id="KW-1185">Reference proteome</keyword>
<keyword id="KW-0687">Ribonucleoprotein</keyword>
<keyword id="KW-0689">Ribosomal protein</keyword>
<keyword id="KW-0694">RNA-binding</keyword>
<keyword id="KW-0699">rRNA-binding</keyword>
<keyword id="KW-0820">tRNA-binding</keyword>
<comment type="function">
    <text evidence="1">One of the primary rRNA binding proteins, it binds directly to 16S rRNA where it nucleates assembly of the head domain of the 30S subunit. Is located at the subunit interface close to the decoding center, probably blocks exit of the E-site tRNA.</text>
</comment>
<comment type="subunit">
    <text evidence="1">Part of the 30S ribosomal subunit. Contacts proteins S9 and S11.</text>
</comment>
<comment type="similarity">
    <text evidence="1">Belongs to the universal ribosomal protein uS7 family.</text>
</comment>
<sequence>MPRKGQVERRDVMADPIYNSKLVTRLINRLMLDGKKGTAQQILYKAFEAIAERSGRDAMEVFEEAMNNIMPVLEVKARRVGGANYQVPVEVRPERRTTLALRYLVNYSRLRNEKTMDARLANEIMDAANNTGASVKKREDMHKMAEANKAFAHYRW</sequence>
<reference key="1">
    <citation type="submission" date="2008-04" db="EMBL/GenBank/DDBJ databases">
        <title>Complete sequence of chromosome of Exiguobacterium sibiricum 255-15.</title>
        <authorList>
            <consortium name="US DOE Joint Genome Institute"/>
            <person name="Copeland A."/>
            <person name="Lucas S."/>
            <person name="Lapidus A."/>
            <person name="Glavina del Rio T."/>
            <person name="Dalin E."/>
            <person name="Tice H."/>
            <person name="Bruce D."/>
            <person name="Goodwin L."/>
            <person name="Pitluck S."/>
            <person name="Kiss H."/>
            <person name="Chertkov O."/>
            <person name="Monk C."/>
            <person name="Brettin T."/>
            <person name="Detter J.C."/>
            <person name="Han C."/>
            <person name="Kuske C.R."/>
            <person name="Schmutz J."/>
            <person name="Larimer F."/>
            <person name="Land M."/>
            <person name="Hauser L."/>
            <person name="Kyrpides N."/>
            <person name="Mikhailova N."/>
            <person name="Vishnivetskaya T."/>
            <person name="Rodrigues D.F."/>
            <person name="Gilichinsky D."/>
            <person name="Tiedje J."/>
            <person name="Richardson P."/>
        </authorList>
    </citation>
    <scope>NUCLEOTIDE SEQUENCE [LARGE SCALE GENOMIC DNA]</scope>
    <source>
        <strain>DSM 17290 / CCUG 55495 / CIP 109462 / JCM 13490 / 255-15</strain>
    </source>
</reference>
<name>RS7_EXIS2</name>
<protein>
    <recommendedName>
        <fullName evidence="1">Small ribosomal subunit protein uS7</fullName>
    </recommendedName>
    <alternativeName>
        <fullName evidence="2">30S ribosomal protein S7</fullName>
    </alternativeName>
</protein>
<proteinExistence type="inferred from homology"/>